<keyword id="KW-0963">Cytoplasm</keyword>
<keyword id="KW-0489">Methyltransferase</keyword>
<keyword id="KW-0698">rRNA processing</keyword>
<keyword id="KW-0949">S-adenosyl-L-methionine</keyword>
<keyword id="KW-0808">Transferase</keyword>
<gene>
    <name evidence="1" type="primary">rlmH</name>
    <name type="ordered locus">BF1467</name>
</gene>
<organism>
    <name type="scientific">Bacteroides fragilis (strain YCH46)</name>
    <dbReference type="NCBI Taxonomy" id="295405"/>
    <lineage>
        <taxon>Bacteria</taxon>
        <taxon>Pseudomonadati</taxon>
        <taxon>Bacteroidota</taxon>
        <taxon>Bacteroidia</taxon>
        <taxon>Bacteroidales</taxon>
        <taxon>Bacteroidaceae</taxon>
        <taxon>Bacteroides</taxon>
    </lineage>
</organism>
<feature type="chain" id="PRO_0000198085" description="Ribosomal RNA large subunit methyltransferase H">
    <location>
        <begin position="1"/>
        <end position="157"/>
    </location>
</feature>
<feature type="binding site" evidence="1">
    <location>
        <position position="73"/>
    </location>
    <ligand>
        <name>S-adenosyl-L-methionine</name>
        <dbReference type="ChEBI" id="CHEBI:59789"/>
    </ligand>
</feature>
<feature type="binding site" evidence="1">
    <location>
        <position position="105"/>
    </location>
    <ligand>
        <name>S-adenosyl-L-methionine</name>
        <dbReference type="ChEBI" id="CHEBI:59789"/>
    </ligand>
</feature>
<feature type="binding site" evidence="1">
    <location>
        <begin position="124"/>
        <end position="129"/>
    </location>
    <ligand>
        <name>S-adenosyl-L-methionine</name>
        <dbReference type="ChEBI" id="CHEBI:59789"/>
    </ligand>
</feature>
<sequence>MKTTLIVVGRTVEQHYITAINDYIERTKHFISFDMEVIPELKNTKSLTPEQQKEKEGELIAKALQPGDVVVLLDEHGKEMRSVEFARWMEKKLVNVNKRLVFIIGGPYGFSQKVYDAAHEKISMSKMTFSHQMIRLIFVEQIYRAMTILNGGPYHHE</sequence>
<evidence type="ECO:0000255" key="1">
    <source>
        <dbReference type="HAMAP-Rule" id="MF_00658"/>
    </source>
</evidence>
<dbReference type="EC" id="2.1.1.177" evidence="1"/>
<dbReference type="EMBL" id="AP006841">
    <property type="protein sequence ID" value="BAD48218.1"/>
    <property type="molecule type" value="Genomic_DNA"/>
</dbReference>
<dbReference type="RefSeq" id="WP_005786211.1">
    <property type="nucleotide sequence ID" value="NZ_UYXF01000002.1"/>
</dbReference>
<dbReference type="RefSeq" id="YP_098752.1">
    <property type="nucleotide sequence ID" value="NC_006347.1"/>
</dbReference>
<dbReference type="SMR" id="Q64WA8"/>
<dbReference type="STRING" id="295405.BF1467"/>
<dbReference type="GeneID" id="60369656"/>
<dbReference type="KEGG" id="bfr:BF1467"/>
<dbReference type="PATRIC" id="fig|295405.11.peg.1431"/>
<dbReference type="HOGENOM" id="CLU_100552_2_0_10"/>
<dbReference type="OrthoDB" id="9806643at2"/>
<dbReference type="Proteomes" id="UP000002197">
    <property type="component" value="Chromosome"/>
</dbReference>
<dbReference type="GO" id="GO:0005737">
    <property type="term" value="C:cytoplasm"/>
    <property type="evidence" value="ECO:0007669"/>
    <property type="project" value="UniProtKB-SubCell"/>
</dbReference>
<dbReference type="GO" id="GO:0070038">
    <property type="term" value="F:rRNA (pseudouridine-N3-)-methyltransferase activity"/>
    <property type="evidence" value="ECO:0007669"/>
    <property type="project" value="UniProtKB-UniRule"/>
</dbReference>
<dbReference type="CDD" id="cd18081">
    <property type="entry name" value="RlmH-like"/>
    <property type="match status" value="1"/>
</dbReference>
<dbReference type="Gene3D" id="3.40.1280.10">
    <property type="match status" value="1"/>
</dbReference>
<dbReference type="HAMAP" id="MF_00658">
    <property type="entry name" value="23SrRNA_methyltr_H"/>
    <property type="match status" value="1"/>
</dbReference>
<dbReference type="InterPro" id="IPR029028">
    <property type="entry name" value="Alpha/beta_knot_MTases"/>
</dbReference>
<dbReference type="InterPro" id="IPR003742">
    <property type="entry name" value="RlmH-like"/>
</dbReference>
<dbReference type="InterPro" id="IPR029026">
    <property type="entry name" value="tRNA_m1G_MTases_N"/>
</dbReference>
<dbReference type="NCBIfam" id="NF000990">
    <property type="entry name" value="PRK00103.2-4"/>
    <property type="match status" value="1"/>
</dbReference>
<dbReference type="PANTHER" id="PTHR33603">
    <property type="entry name" value="METHYLTRANSFERASE"/>
    <property type="match status" value="1"/>
</dbReference>
<dbReference type="PANTHER" id="PTHR33603:SF1">
    <property type="entry name" value="RIBOSOMAL RNA LARGE SUBUNIT METHYLTRANSFERASE H"/>
    <property type="match status" value="1"/>
</dbReference>
<dbReference type="Pfam" id="PF02590">
    <property type="entry name" value="SPOUT_MTase"/>
    <property type="match status" value="1"/>
</dbReference>
<dbReference type="PIRSF" id="PIRSF004505">
    <property type="entry name" value="MT_bac"/>
    <property type="match status" value="1"/>
</dbReference>
<dbReference type="SUPFAM" id="SSF75217">
    <property type="entry name" value="alpha/beta knot"/>
    <property type="match status" value="1"/>
</dbReference>
<name>RLMH_BACFR</name>
<protein>
    <recommendedName>
        <fullName evidence="1">Ribosomal RNA large subunit methyltransferase H</fullName>
        <ecNumber evidence="1">2.1.1.177</ecNumber>
    </recommendedName>
    <alternativeName>
        <fullName evidence="1">23S rRNA (pseudouridine1915-N3)-methyltransferase</fullName>
    </alternativeName>
    <alternativeName>
        <fullName evidence="1">23S rRNA m3Psi1915 methyltransferase</fullName>
    </alternativeName>
    <alternativeName>
        <fullName evidence="1">rRNA (pseudouridine-N3-)-methyltransferase RlmH</fullName>
    </alternativeName>
</protein>
<proteinExistence type="inferred from homology"/>
<accession>Q64WA8</accession>
<comment type="function">
    <text evidence="1">Specifically methylates the pseudouridine at position 1915 (m3Psi1915) in 23S rRNA.</text>
</comment>
<comment type="catalytic activity">
    <reaction evidence="1">
        <text>pseudouridine(1915) in 23S rRNA + S-adenosyl-L-methionine = N(3)-methylpseudouridine(1915) in 23S rRNA + S-adenosyl-L-homocysteine + H(+)</text>
        <dbReference type="Rhea" id="RHEA:42752"/>
        <dbReference type="Rhea" id="RHEA-COMP:10221"/>
        <dbReference type="Rhea" id="RHEA-COMP:10222"/>
        <dbReference type="ChEBI" id="CHEBI:15378"/>
        <dbReference type="ChEBI" id="CHEBI:57856"/>
        <dbReference type="ChEBI" id="CHEBI:59789"/>
        <dbReference type="ChEBI" id="CHEBI:65314"/>
        <dbReference type="ChEBI" id="CHEBI:74486"/>
        <dbReference type="EC" id="2.1.1.177"/>
    </reaction>
</comment>
<comment type="subunit">
    <text evidence="1">Homodimer.</text>
</comment>
<comment type="subcellular location">
    <subcellularLocation>
        <location evidence="1">Cytoplasm</location>
    </subcellularLocation>
</comment>
<comment type="similarity">
    <text evidence="1">Belongs to the RNA methyltransferase RlmH family.</text>
</comment>
<reference key="1">
    <citation type="journal article" date="2004" name="Proc. Natl. Acad. Sci. U.S.A.">
        <title>Genomic analysis of Bacteroides fragilis reveals extensive DNA inversions regulating cell surface adaptation.</title>
        <authorList>
            <person name="Kuwahara T."/>
            <person name="Yamashita A."/>
            <person name="Hirakawa H."/>
            <person name="Nakayama H."/>
            <person name="Toh H."/>
            <person name="Okada N."/>
            <person name="Kuhara S."/>
            <person name="Hattori M."/>
            <person name="Hayashi T."/>
            <person name="Ohnishi Y."/>
        </authorList>
    </citation>
    <scope>NUCLEOTIDE SEQUENCE [LARGE SCALE GENOMIC DNA]</scope>
    <source>
        <strain>YCH46</strain>
    </source>
</reference>